<reference key="1">
    <citation type="journal article" date="2004" name="Nature">
        <title>Genome evolution in yeasts.</title>
        <authorList>
            <person name="Dujon B."/>
            <person name="Sherman D."/>
            <person name="Fischer G."/>
            <person name="Durrens P."/>
            <person name="Casaregola S."/>
            <person name="Lafontaine I."/>
            <person name="de Montigny J."/>
            <person name="Marck C."/>
            <person name="Neuveglise C."/>
            <person name="Talla E."/>
            <person name="Goffard N."/>
            <person name="Frangeul L."/>
            <person name="Aigle M."/>
            <person name="Anthouard V."/>
            <person name="Babour A."/>
            <person name="Barbe V."/>
            <person name="Barnay S."/>
            <person name="Blanchin S."/>
            <person name="Beckerich J.-M."/>
            <person name="Beyne E."/>
            <person name="Bleykasten C."/>
            <person name="Boisrame A."/>
            <person name="Boyer J."/>
            <person name="Cattolico L."/>
            <person name="Confanioleri F."/>
            <person name="de Daruvar A."/>
            <person name="Despons L."/>
            <person name="Fabre E."/>
            <person name="Fairhead C."/>
            <person name="Ferry-Dumazet H."/>
            <person name="Groppi A."/>
            <person name="Hantraye F."/>
            <person name="Hennequin C."/>
            <person name="Jauniaux N."/>
            <person name="Joyet P."/>
            <person name="Kachouri R."/>
            <person name="Kerrest A."/>
            <person name="Koszul R."/>
            <person name="Lemaire M."/>
            <person name="Lesur I."/>
            <person name="Ma L."/>
            <person name="Muller H."/>
            <person name="Nicaud J.-M."/>
            <person name="Nikolski M."/>
            <person name="Oztas S."/>
            <person name="Ozier-Kalogeropoulos O."/>
            <person name="Pellenz S."/>
            <person name="Potier S."/>
            <person name="Richard G.-F."/>
            <person name="Straub M.-L."/>
            <person name="Suleau A."/>
            <person name="Swennen D."/>
            <person name="Tekaia F."/>
            <person name="Wesolowski-Louvel M."/>
            <person name="Westhof E."/>
            <person name="Wirth B."/>
            <person name="Zeniou-Meyer M."/>
            <person name="Zivanovic Y."/>
            <person name="Bolotin-Fukuhara M."/>
            <person name="Thierry A."/>
            <person name="Bouchier C."/>
            <person name="Caudron B."/>
            <person name="Scarpelli C."/>
            <person name="Gaillardin C."/>
            <person name="Weissenbach J."/>
            <person name="Wincker P."/>
            <person name="Souciet J.-L."/>
        </authorList>
    </citation>
    <scope>NUCLEOTIDE SEQUENCE [LARGE SCALE GENOMIC DNA]</scope>
    <source>
        <strain>ATCC 8585 / CBS 2359 / DSM 70799 / NBRC 1267 / NRRL Y-1140 / WM37</strain>
    </source>
</reference>
<sequence length="662" mass="75914">MLFNFYNKTSAACKSLPAKALSNVRYFQTSPISRKMPLPPVLESRRPKESPEFDYSTLSNYKSFKVKHSQLDVSVDFKKKTISGSVSYEIEKVKKDENTIKLDTSYLKISKVKVDDEDDVKFKLLERKHPLGAQLIVSPSSLPEIFHLCLQFSTTADCTALQWLDEHQTSGKPYVFSQLEAIHARSLFTCFDTPSVKSTYLANIKSELPVVFSGIQTGYDDSTKVYSFKQEVPIPAYLIGIASGDLASADIGPRSKVYVEPYRLKDAQWEFDGDVEKFITTAEDIIFKYEWGTYDILVNPNSYPYGGMESPNMTFATPTLIAHDKSNIDVIAHELAHSWSGNLVTNCSWDHFWLNEGWTVYLERRITGAIHGEATRHFSSLIGWNDLEGSISAMQNPERFSCLVQNLKDGTDPDNAFSTVPYEKGSNLLFYLENLLGGKEVFDPFIKHYFTKFARQSLDTWQFLDALFEFFHDKREILESVDWQTWLFTPGMPPKPKLITDLADDVYALANKWIASAQKFTEREQFEKEFSIKDISEFSSNQIVLLLDTLVQGGMPEKDTFKWSNYPEASEIFTDIYEDKISKSQNAEVIFRNYRLQVKSHITSSYPELAEWLGTVGRMKFVRPGYRLLNEVDRELAIKTFHRFRDSYHPICKSLVKQDLGI</sequence>
<gene>
    <name type="ordered locus">KLLA0F03883g</name>
</gene>
<dbReference type="EC" id="3.4.11.-"/>
<dbReference type="EC" id="3.3.2.10"/>
<dbReference type="EMBL" id="CR382126">
    <property type="protein sequence ID" value="CAG97964.1"/>
    <property type="molecule type" value="Genomic_DNA"/>
</dbReference>
<dbReference type="RefSeq" id="XP_455256.1">
    <property type="nucleotide sequence ID" value="XM_455256.1"/>
</dbReference>
<dbReference type="SMR" id="Q6CLD3"/>
<dbReference type="FunCoup" id="Q6CLD3">
    <property type="interactions" value="1078"/>
</dbReference>
<dbReference type="STRING" id="284590.Q6CLD3"/>
<dbReference type="MEROPS" id="M01.034"/>
<dbReference type="PaxDb" id="284590-Q6CLD3"/>
<dbReference type="KEGG" id="kla:KLLA0_F03883g"/>
<dbReference type="eggNOG" id="KOG1047">
    <property type="taxonomic scope" value="Eukaryota"/>
</dbReference>
<dbReference type="HOGENOM" id="CLU_014505_1_2_1"/>
<dbReference type="InParanoid" id="Q6CLD3"/>
<dbReference type="OMA" id="CTALQWM"/>
<dbReference type="Proteomes" id="UP000000598">
    <property type="component" value="Chromosome F"/>
</dbReference>
<dbReference type="GO" id="GO:0005829">
    <property type="term" value="C:cytosol"/>
    <property type="evidence" value="ECO:0007669"/>
    <property type="project" value="TreeGrafter"/>
</dbReference>
<dbReference type="GO" id="GO:0005634">
    <property type="term" value="C:nucleus"/>
    <property type="evidence" value="ECO:0007669"/>
    <property type="project" value="UniProtKB-SubCell"/>
</dbReference>
<dbReference type="GO" id="GO:0004177">
    <property type="term" value="F:aminopeptidase activity"/>
    <property type="evidence" value="ECO:0000250"/>
    <property type="project" value="UniProtKB"/>
</dbReference>
<dbReference type="GO" id="GO:0004301">
    <property type="term" value="F:epoxide hydrolase activity"/>
    <property type="evidence" value="ECO:0000250"/>
    <property type="project" value="UniProtKB"/>
</dbReference>
<dbReference type="GO" id="GO:0008237">
    <property type="term" value="F:metallopeptidase activity"/>
    <property type="evidence" value="ECO:0007669"/>
    <property type="project" value="UniProtKB-KW"/>
</dbReference>
<dbReference type="GO" id="GO:0008270">
    <property type="term" value="F:zinc ion binding"/>
    <property type="evidence" value="ECO:0000250"/>
    <property type="project" value="UniProtKB"/>
</dbReference>
<dbReference type="GO" id="GO:0043171">
    <property type="term" value="P:peptide catabolic process"/>
    <property type="evidence" value="ECO:0000250"/>
    <property type="project" value="UniProtKB"/>
</dbReference>
<dbReference type="GO" id="GO:0006508">
    <property type="term" value="P:proteolysis"/>
    <property type="evidence" value="ECO:0007669"/>
    <property type="project" value="UniProtKB-KW"/>
</dbReference>
<dbReference type="CDD" id="cd09599">
    <property type="entry name" value="M1_LTA4H"/>
    <property type="match status" value="1"/>
</dbReference>
<dbReference type="FunFam" id="1.10.390.10:FF:000009">
    <property type="entry name" value="Leukotriene A(4) hydrolase"/>
    <property type="match status" value="1"/>
</dbReference>
<dbReference type="FunFam" id="1.25.40.320:FF:000001">
    <property type="entry name" value="Leukotriene A(4) hydrolase"/>
    <property type="match status" value="1"/>
</dbReference>
<dbReference type="FunFam" id="2.60.40.1730:FF:000004">
    <property type="entry name" value="Leukotriene A(4) hydrolase"/>
    <property type="match status" value="1"/>
</dbReference>
<dbReference type="FunFam" id="3.30.2010.30:FF:000001">
    <property type="entry name" value="Leukotriene A(4) hydrolase"/>
    <property type="match status" value="1"/>
</dbReference>
<dbReference type="Gene3D" id="3.30.2010.30">
    <property type="match status" value="1"/>
</dbReference>
<dbReference type="Gene3D" id="1.10.390.10">
    <property type="entry name" value="Neutral Protease Domain 2"/>
    <property type="match status" value="1"/>
</dbReference>
<dbReference type="Gene3D" id="1.25.40.320">
    <property type="entry name" value="Peptidase M1, leukotriene A4 hydrolase/aminopeptidase C-terminal domain"/>
    <property type="match status" value="1"/>
</dbReference>
<dbReference type="Gene3D" id="2.60.40.1730">
    <property type="entry name" value="tricorn interacting facor f3 domain"/>
    <property type="match status" value="1"/>
</dbReference>
<dbReference type="InterPro" id="IPR045357">
    <property type="entry name" value="Aminopeptidase_N-like_N"/>
</dbReference>
<dbReference type="InterPro" id="IPR042097">
    <property type="entry name" value="Aminopeptidase_N-like_N_sf"/>
</dbReference>
<dbReference type="InterPro" id="IPR016024">
    <property type="entry name" value="ARM-type_fold"/>
</dbReference>
<dbReference type="InterPro" id="IPR012777">
    <property type="entry name" value="LTA4H"/>
</dbReference>
<dbReference type="InterPro" id="IPR049980">
    <property type="entry name" value="LTA4H_cat"/>
</dbReference>
<dbReference type="InterPro" id="IPR038502">
    <property type="entry name" value="M1_LTA-4_hydro/amino_C_sf"/>
</dbReference>
<dbReference type="InterPro" id="IPR034015">
    <property type="entry name" value="M1_LTA4H"/>
</dbReference>
<dbReference type="InterPro" id="IPR001930">
    <property type="entry name" value="Peptidase_M1"/>
</dbReference>
<dbReference type="InterPro" id="IPR015211">
    <property type="entry name" value="Peptidase_M1_C"/>
</dbReference>
<dbReference type="InterPro" id="IPR014782">
    <property type="entry name" value="Peptidase_M1_dom"/>
</dbReference>
<dbReference type="InterPro" id="IPR027268">
    <property type="entry name" value="Peptidase_M4/M1_CTD_sf"/>
</dbReference>
<dbReference type="NCBIfam" id="TIGR02411">
    <property type="entry name" value="leuko_A4_hydro"/>
    <property type="match status" value="1"/>
</dbReference>
<dbReference type="PANTHER" id="PTHR45726">
    <property type="entry name" value="LEUKOTRIENE A-4 HYDROLASE"/>
    <property type="match status" value="1"/>
</dbReference>
<dbReference type="PANTHER" id="PTHR45726:SF3">
    <property type="entry name" value="LEUKOTRIENE A-4 HYDROLASE"/>
    <property type="match status" value="1"/>
</dbReference>
<dbReference type="Pfam" id="PF09127">
    <property type="entry name" value="Leuk-A4-hydro_C"/>
    <property type="match status" value="1"/>
</dbReference>
<dbReference type="Pfam" id="PF01433">
    <property type="entry name" value="Peptidase_M1"/>
    <property type="match status" value="1"/>
</dbReference>
<dbReference type="Pfam" id="PF17900">
    <property type="entry name" value="Peptidase_M1_N"/>
    <property type="match status" value="1"/>
</dbReference>
<dbReference type="PRINTS" id="PR00756">
    <property type="entry name" value="ALADIPTASE"/>
</dbReference>
<dbReference type="SMART" id="SM01263">
    <property type="entry name" value="Leuk-A4-hydro_C"/>
    <property type="match status" value="1"/>
</dbReference>
<dbReference type="SUPFAM" id="SSF48371">
    <property type="entry name" value="ARM repeat"/>
    <property type="match status" value="1"/>
</dbReference>
<dbReference type="SUPFAM" id="SSF63737">
    <property type="entry name" value="Leukotriene A4 hydrolase N-terminal domain"/>
    <property type="match status" value="1"/>
</dbReference>
<dbReference type="SUPFAM" id="SSF55486">
    <property type="entry name" value="Metalloproteases ('zincins'), catalytic domain"/>
    <property type="match status" value="1"/>
</dbReference>
<dbReference type="PROSITE" id="PS00142">
    <property type="entry name" value="ZINC_PROTEASE"/>
    <property type="match status" value="1"/>
</dbReference>
<evidence type="ECO:0000250" key="1">
    <source>
        <dbReference type="UniProtKB" id="P09960"/>
    </source>
</evidence>
<evidence type="ECO:0000250" key="2">
    <source>
        <dbReference type="UniProtKB" id="Q10740"/>
    </source>
</evidence>
<evidence type="ECO:0000255" key="3">
    <source>
        <dbReference type="PROSITE-ProRule" id="PRU10095"/>
    </source>
</evidence>
<evidence type="ECO:0000305" key="4"/>
<name>LKHA4_KLULA</name>
<accession>Q6CLD3</accession>
<proteinExistence type="inferred from homology"/>
<feature type="chain" id="PRO_0000324930" description="Leucine aminopeptidase 2">
    <location>
        <begin position="1"/>
        <end position="662"/>
    </location>
</feature>
<feature type="active site" description="Proton acceptor" evidence="3">
    <location>
        <position position="334"/>
    </location>
</feature>
<feature type="active site" description="Proton donor" evidence="3">
    <location>
        <position position="422"/>
    </location>
</feature>
<feature type="binding site" evidence="1">
    <location>
        <begin position="178"/>
        <end position="180"/>
    </location>
    <ligand>
        <name>a peptide</name>
        <dbReference type="ChEBI" id="CHEBI:60466"/>
    </ligand>
</feature>
<feature type="binding site" evidence="1">
    <location>
        <begin position="304"/>
        <end position="309"/>
    </location>
    <ligand>
        <name>a peptide</name>
        <dbReference type="ChEBI" id="CHEBI:60466"/>
    </ligand>
</feature>
<feature type="binding site" evidence="3">
    <location>
        <position position="333"/>
    </location>
    <ligand>
        <name>Zn(2+)</name>
        <dbReference type="ChEBI" id="CHEBI:29105"/>
        <note>catalytic</note>
    </ligand>
</feature>
<feature type="binding site" evidence="3">
    <location>
        <position position="337"/>
    </location>
    <ligand>
        <name>Zn(2+)</name>
        <dbReference type="ChEBI" id="CHEBI:29105"/>
        <note>catalytic</note>
    </ligand>
</feature>
<feature type="binding site" evidence="3">
    <location>
        <position position="356"/>
    </location>
    <ligand>
        <name>Zn(2+)</name>
        <dbReference type="ChEBI" id="CHEBI:29105"/>
        <note>catalytic</note>
    </ligand>
</feature>
<keyword id="KW-0963">Cytoplasm</keyword>
<keyword id="KW-0378">Hydrolase</keyword>
<keyword id="KW-0479">Metal-binding</keyword>
<keyword id="KW-0482">Metalloprotease</keyword>
<keyword id="KW-0539">Nucleus</keyword>
<keyword id="KW-0645">Protease</keyword>
<keyword id="KW-1185">Reference proteome</keyword>
<keyword id="KW-0862">Zinc</keyword>
<comment type="function">
    <text evidence="2">Aminopeptidase that preferentially cleaves di- and tripeptides. Also has low epoxide hydrolase activity (in vitro). Can hydrolyze the epoxide leukotriene LTA(4) but it forms preferentially 5,6-dihydroxy-7,9,11,14-eicosatetraenoic acid rather than the cytokine leukotriene B(4) as the product compared to the homologous mammalian enzyme (in vitro).</text>
</comment>
<comment type="catalytic activity">
    <reaction evidence="2">
        <text>an epoxide + H2O = an ethanediol</text>
        <dbReference type="Rhea" id="RHEA:19037"/>
        <dbReference type="ChEBI" id="CHEBI:15377"/>
        <dbReference type="ChEBI" id="CHEBI:32955"/>
        <dbReference type="ChEBI" id="CHEBI:140594"/>
        <dbReference type="EC" id="3.3.2.10"/>
    </reaction>
</comment>
<comment type="cofactor">
    <cofactor evidence="2">
        <name>Zn(2+)</name>
        <dbReference type="ChEBI" id="CHEBI:29105"/>
    </cofactor>
    <text evidence="2">Binds 1 zinc ion per subunit.</text>
</comment>
<comment type="subcellular location">
    <subcellularLocation>
        <location evidence="2">Cytoplasm</location>
    </subcellularLocation>
    <subcellularLocation>
        <location evidence="2">Nucleus</location>
    </subcellularLocation>
</comment>
<comment type="similarity">
    <text evidence="4">Belongs to the peptidase M1 family.</text>
</comment>
<organism>
    <name type="scientific">Kluyveromyces lactis (strain ATCC 8585 / CBS 2359 / DSM 70799 / NBRC 1267 / NRRL Y-1140 / WM37)</name>
    <name type="common">Yeast</name>
    <name type="synonym">Candida sphaerica</name>
    <dbReference type="NCBI Taxonomy" id="284590"/>
    <lineage>
        <taxon>Eukaryota</taxon>
        <taxon>Fungi</taxon>
        <taxon>Dikarya</taxon>
        <taxon>Ascomycota</taxon>
        <taxon>Saccharomycotina</taxon>
        <taxon>Saccharomycetes</taxon>
        <taxon>Saccharomycetales</taxon>
        <taxon>Saccharomycetaceae</taxon>
        <taxon>Kluyveromyces</taxon>
    </lineage>
</organism>
<protein>
    <recommendedName>
        <fullName>Leucine aminopeptidase 2</fullName>
        <ecNumber>3.4.11.-</ecNumber>
    </recommendedName>
    <alternativeName>
        <fullName>Epoxide hydrolase</fullName>
        <ecNumber>3.3.2.10</ecNumber>
    </alternativeName>
    <alternativeName>
        <fullName>Leukotriene A-4 hydrolase homolog</fullName>
        <shortName>LTA-4 hydrolase</shortName>
    </alternativeName>
</protein>